<sequence>MEFKHTSVLLHETIDNLAPQSGGTYVDATFGGGGHARYLLRKLDKGNLIGFDQDQYAIDTAQSNFAAFLKEDSQPRLQLVHNNFSHLKEELAKLGISGIDGIYYDLGVSSPQLDQAERGFSYRFDARLDMRMDQSQDFDAYQLVNQYDQKQLADVLYRYGDEKFSRQIARKIVERRRGKPIETTFELVEIIKEAIPAAARRRGGHPAKKSFQAIRVEVNHELDVLRASLEEAISLLNPGGRISVITFQSLEDKIVKQTFKKYSEVEIPRGMPVVPEGIKPTLRLVNRKSITASEEELAENNRSHSAKLRVAEKL</sequence>
<name>RSMH_LACDB</name>
<accession>Q04B77</accession>
<comment type="function">
    <text evidence="1">Specifically methylates the N4 position of cytidine in position 1402 (C1402) of 16S rRNA.</text>
</comment>
<comment type="catalytic activity">
    <reaction evidence="1">
        <text>cytidine(1402) in 16S rRNA + S-adenosyl-L-methionine = N(4)-methylcytidine(1402) in 16S rRNA + S-adenosyl-L-homocysteine + H(+)</text>
        <dbReference type="Rhea" id="RHEA:42928"/>
        <dbReference type="Rhea" id="RHEA-COMP:10286"/>
        <dbReference type="Rhea" id="RHEA-COMP:10287"/>
        <dbReference type="ChEBI" id="CHEBI:15378"/>
        <dbReference type="ChEBI" id="CHEBI:57856"/>
        <dbReference type="ChEBI" id="CHEBI:59789"/>
        <dbReference type="ChEBI" id="CHEBI:74506"/>
        <dbReference type="ChEBI" id="CHEBI:82748"/>
        <dbReference type="EC" id="2.1.1.199"/>
    </reaction>
</comment>
<comment type="subcellular location">
    <subcellularLocation>
        <location evidence="1">Cytoplasm</location>
    </subcellularLocation>
</comment>
<comment type="similarity">
    <text evidence="1">Belongs to the methyltransferase superfamily. RsmH family.</text>
</comment>
<comment type="sequence caution" evidence="2">
    <conflict type="erroneous initiation">
        <sequence resource="EMBL-CDS" id="ABJ58295"/>
    </conflict>
</comment>
<protein>
    <recommendedName>
        <fullName evidence="1">Ribosomal RNA small subunit methyltransferase H</fullName>
        <ecNumber evidence="1">2.1.1.199</ecNumber>
    </recommendedName>
    <alternativeName>
        <fullName evidence="1">16S rRNA m(4)C1402 methyltransferase</fullName>
    </alternativeName>
    <alternativeName>
        <fullName evidence="1">rRNA (cytosine-N(4)-)-methyltransferase RsmH</fullName>
    </alternativeName>
</protein>
<gene>
    <name evidence="1" type="primary">rsmH</name>
    <name type="synonym">mraW</name>
    <name type="ordered locus">LBUL_0669</name>
</gene>
<reference key="1">
    <citation type="journal article" date="2006" name="Proc. Natl. Acad. Sci. U.S.A.">
        <title>Comparative genomics of the lactic acid bacteria.</title>
        <authorList>
            <person name="Makarova K.S."/>
            <person name="Slesarev A."/>
            <person name="Wolf Y.I."/>
            <person name="Sorokin A."/>
            <person name="Mirkin B."/>
            <person name="Koonin E.V."/>
            <person name="Pavlov A."/>
            <person name="Pavlova N."/>
            <person name="Karamychev V."/>
            <person name="Polouchine N."/>
            <person name="Shakhova V."/>
            <person name="Grigoriev I."/>
            <person name="Lou Y."/>
            <person name="Rohksar D."/>
            <person name="Lucas S."/>
            <person name="Huang K."/>
            <person name="Goodstein D.M."/>
            <person name="Hawkins T."/>
            <person name="Plengvidhya V."/>
            <person name="Welker D."/>
            <person name="Hughes J."/>
            <person name="Goh Y."/>
            <person name="Benson A."/>
            <person name="Baldwin K."/>
            <person name="Lee J.-H."/>
            <person name="Diaz-Muniz I."/>
            <person name="Dosti B."/>
            <person name="Smeianov V."/>
            <person name="Wechter W."/>
            <person name="Barabote R."/>
            <person name="Lorca G."/>
            <person name="Altermann E."/>
            <person name="Barrangou R."/>
            <person name="Ganesan B."/>
            <person name="Xie Y."/>
            <person name="Rawsthorne H."/>
            <person name="Tamir D."/>
            <person name="Parker C."/>
            <person name="Breidt F."/>
            <person name="Broadbent J.R."/>
            <person name="Hutkins R."/>
            <person name="O'Sullivan D."/>
            <person name="Steele J."/>
            <person name="Unlu G."/>
            <person name="Saier M.H. Jr."/>
            <person name="Klaenhammer T."/>
            <person name="Richardson P."/>
            <person name="Kozyavkin S."/>
            <person name="Weimer B.C."/>
            <person name="Mills D.A."/>
        </authorList>
    </citation>
    <scope>NUCLEOTIDE SEQUENCE [LARGE SCALE GENOMIC DNA]</scope>
    <source>
        <strain>ATCC BAA-365 / Lb-18</strain>
    </source>
</reference>
<proteinExistence type="inferred from homology"/>
<evidence type="ECO:0000255" key="1">
    <source>
        <dbReference type="HAMAP-Rule" id="MF_01007"/>
    </source>
</evidence>
<evidence type="ECO:0000305" key="2"/>
<keyword id="KW-0963">Cytoplasm</keyword>
<keyword id="KW-0489">Methyltransferase</keyword>
<keyword id="KW-0698">rRNA processing</keyword>
<keyword id="KW-0949">S-adenosyl-L-methionine</keyword>
<keyword id="KW-0808">Transferase</keyword>
<organism>
    <name type="scientific">Lactobacillus delbrueckii subsp. bulgaricus (strain ATCC BAA-365 / Lb-18)</name>
    <dbReference type="NCBI Taxonomy" id="321956"/>
    <lineage>
        <taxon>Bacteria</taxon>
        <taxon>Bacillati</taxon>
        <taxon>Bacillota</taxon>
        <taxon>Bacilli</taxon>
        <taxon>Lactobacillales</taxon>
        <taxon>Lactobacillaceae</taxon>
        <taxon>Lactobacillus</taxon>
    </lineage>
</organism>
<feature type="chain" id="PRO_0000386943" description="Ribosomal RNA small subunit methyltransferase H">
    <location>
        <begin position="1"/>
        <end position="314"/>
    </location>
</feature>
<feature type="binding site" evidence="1">
    <location>
        <begin position="33"/>
        <end position="35"/>
    </location>
    <ligand>
        <name>S-adenosyl-L-methionine</name>
        <dbReference type="ChEBI" id="CHEBI:59789"/>
    </ligand>
</feature>
<feature type="binding site" evidence="1">
    <location>
        <position position="52"/>
    </location>
    <ligand>
        <name>S-adenosyl-L-methionine</name>
        <dbReference type="ChEBI" id="CHEBI:59789"/>
    </ligand>
</feature>
<feature type="binding site" evidence="1">
    <location>
        <position position="84"/>
    </location>
    <ligand>
        <name>S-adenosyl-L-methionine</name>
        <dbReference type="ChEBI" id="CHEBI:59789"/>
    </ligand>
</feature>
<feature type="binding site" evidence="1">
    <location>
        <position position="105"/>
    </location>
    <ligand>
        <name>S-adenosyl-L-methionine</name>
        <dbReference type="ChEBI" id="CHEBI:59789"/>
    </ligand>
</feature>
<feature type="binding site" evidence="1">
    <location>
        <position position="112"/>
    </location>
    <ligand>
        <name>S-adenosyl-L-methionine</name>
        <dbReference type="ChEBI" id="CHEBI:59789"/>
    </ligand>
</feature>
<dbReference type="EC" id="2.1.1.199" evidence="1"/>
<dbReference type="EMBL" id="CP000412">
    <property type="protein sequence ID" value="ABJ58295.1"/>
    <property type="status" value="ALT_INIT"/>
    <property type="molecule type" value="Genomic_DNA"/>
</dbReference>
<dbReference type="RefSeq" id="WP_003619159.1">
    <property type="nucleotide sequence ID" value="NC_008529.1"/>
</dbReference>
<dbReference type="SMR" id="Q04B77"/>
<dbReference type="KEGG" id="lbu:LBUL_0669"/>
<dbReference type="HOGENOM" id="CLU_038422_2_0_9"/>
<dbReference type="BioCyc" id="LDEL321956:LBUL_RS03190-MONOMER"/>
<dbReference type="GO" id="GO:0005737">
    <property type="term" value="C:cytoplasm"/>
    <property type="evidence" value="ECO:0007669"/>
    <property type="project" value="UniProtKB-SubCell"/>
</dbReference>
<dbReference type="GO" id="GO:0071424">
    <property type="term" value="F:rRNA (cytosine-N4-)-methyltransferase activity"/>
    <property type="evidence" value="ECO:0007669"/>
    <property type="project" value="UniProtKB-UniRule"/>
</dbReference>
<dbReference type="GO" id="GO:0070475">
    <property type="term" value="P:rRNA base methylation"/>
    <property type="evidence" value="ECO:0007669"/>
    <property type="project" value="UniProtKB-UniRule"/>
</dbReference>
<dbReference type="FunFam" id="1.10.150.170:FF:000001">
    <property type="entry name" value="Ribosomal RNA small subunit methyltransferase H"/>
    <property type="match status" value="1"/>
</dbReference>
<dbReference type="Gene3D" id="1.10.150.170">
    <property type="entry name" value="Putative methyltransferase TM0872, insert domain"/>
    <property type="match status" value="1"/>
</dbReference>
<dbReference type="Gene3D" id="3.40.50.150">
    <property type="entry name" value="Vaccinia Virus protein VP39"/>
    <property type="match status" value="1"/>
</dbReference>
<dbReference type="HAMAP" id="MF_01007">
    <property type="entry name" value="16SrRNA_methyltr_H"/>
    <property type="match status" value="1"/>
</dbReference>
<dbReference type="InterPro" id="IPR002903">
    <property type="entry name" value="RsmH"/>
</dbReference>
<dbReference type="InterPro" id="IPR023397">
    <property type="entry name" value="SAM-dep_MeTrfase_MraW_recog"/>
</dbReference>
<dbReference type="InterPro" id="IPR029063">
    <property type="entry name" value="SAM-dependent_MTases_sf"/>
</dbReference>
<dbReference type="NCBIfam" id="TIGR00006">
    <property type="entry name" value="16S rRNA (cytosine(1402)-N(4))-methyltransferase RsmH"/>
    <property type="match status" value="1"/>
</dbReference>
<dbReference type="PANTHER" id="PTHR11265:SF0">
    <property type="entry name" value="12S RRNA N4-METHYLCYTIDINE METHYLTRANSFERASE"/>
    <property type="match status" value="1"/>
</dbReference>
<dbReference type="PANTHER" id="PTHR11265">
    <property type="entry name" value="S-ADENOSYL-METHYLTRANSFERASE MRAW"/>
    <property type="match status" value="1"/>
</dbReference>
<dbReference type="Pfam" id="PF01795">
    <property type="entry name" value="Methyltransf_5"/>
    <property type="match status" value="1"/>
</dbReference>
<dbReference type="PIRSF" id="PIRSF004486">
    <property type="entry name" value="MraW"/>
    <property type="match status" value="1"/>
</dbReference>
<dbReference type="SUPFAM" id="SSF81799">
    <property type="entry name" value="Putative methyltransferase TM0872, insert domain"/>
    <property type="match status" value="1"/>
</dbReference>
<dbReference type="SUPFAM" id="SSF53335">
    <property type="entry name" value="S-adenosyl-L-methionine-dependent methyltransferases"/>
    <property type="match status" value="1"/>
</dbReference>